<reference key="1">
    <citation type="journal article" date="2007" name="Nature">
        <title>Evolution of genes and genomes on the Drosophila phylogeny.</title>
        <authorList>
            <consortium name="Drosophila 12 genomes consortium"/>
        </authorList>
    </citation>
    <scope>NUCLEOTIDE SEQUENCE [LARGE SCALE GENOMIC DNA]</scope>
    <source>
        <strain>Tucson 14024-0371.13</strain>
    </source>
</reference>
<keyword id="KW-0067">ATP-binding</keyword>
<keyword id="KW-0507">mRNA processing</keyword>
<keyword id="KW-0547">Nucleotide-binding</keyword>
<keyword id="KW-0539">Nucleus</keyword>
<keyword id="KW-1185">Reference proteome</keyword>
<organism>
    <name type="scientific">Drosophila ananassae</name>
    <name type="common">Fruit fly</name>
    <dbReference type="NCBI Taxonomy" id="7217"/>
    <lineage>
        <taxon>Eukaryota</taxon>
        <taxon>Metazoa</taxon>
        <taxon>Ecdysozoa</taxon>
        <taxon>Arthropoda</taxon>
        <taxon>Hexapoda</taxon>
        <taxon>Insecta</taxon>
        <taxon>Pterygota</taxon>
        <taxon>Neoptera</taxon>
        <taxon>Endopterygota</taxon>
        <taxon>Diptera</taxon>
        <taxon>Brachycera</taxon>
        <taxon>Muscomorpha</taxon>
        <taxon>Ephydroidea</taxon>
        <taxon>Drosophilidae</taxon>
        <taxon>Drosophila</taxon>
        <taxon>Sophophora</taxon>
    </lineage>
</organism>
<evidence type="ECO:0000255" key="1">
    <source>
        <dbReference type="HAMAP-Rule" id="MF_03035"/>
    </source>
</evidence>
<dbReference type="EMBL" id="CH902619">
    <property type="protein sequence ID" value="EDV37908.1"/>
    <property type="molecule type" value="Genomic_DNA"/>
</dbReference>
<dbReference type="SMR" id="B3MGZ0"/>
<dbReference type="FunCoup" id="B3MGZ0">
    <property type="interactions" value="1542"/>
</dbReference>
<dbReference type="STRING" id="7217.B3MGZ0"/>
<dbReference type="EnsemblMetazoa" id="FBtr0115882">
    <property type="protein sequence ID" value="FBpp0114374"/>
    <property type="gene ID" value="FBgn0088222"/>
</dbReference>
<dbReference type="EnsemblMetazoa" id="XM_001961050.4">
    <property type="protein sequence ID" value="XP_001961086.1"/>
    <property type="gene ID" value="LOC6494046"/>
</dbReference>
<dbReference type="GeneID" id="6494046"/>
<dbReference type="KEGG" id="dan:6494046"/>
<dbReference type="CTD" id="36494"/>
<dbReference type="eggNOG" id="KOG2749">
    <property type="taxonomic scope" value="Eukaryota"/>
</dbReference>
<dbReference type="HOGENOM" id="CLU_018195_1_0_1"/>
<dbReference type="InParanoid" id="B3MGZ0"/>
<dbReference type="OMA" id="VQYVNCH"/>
<dbReference type="OrthoDB" id="258143at2759"/>
<dbReference type="PhylomeDB" id="B3MGZ0"/>
<dbReference type="Proteomes" id="UP000007801">
    <property type="component" value="Unassembled WGS sequence"/>
</dbReference>
<dbReference type="GO" id="GO:0005849">
    <property type="term" value="C:mRNA cleavage factor complex"/>
    <property type="evidence" value="ECO:0007669"/>
    <property type="project" value="InterPro"/>
</dbReference>
<dbReference type="GO" id="GO:0000214">
    <property type="term" value="C:tRNA-intron endonuclease complex"/>
    <property type="evidence" value="ECO:0000250"/>
    <property type="project" value="UniProtKB"/>
</dbReference>
<dbReference type="GO" id="GO:0005524">
    <property type="term" value="F:ATP binding"/>
    <property type="evidence" value="ECO:0007669"/>
    <property type="project" value="UniProtKB-UniRule"/>
</dbReference>
<dbReference type="GO" id="GO:0051731">
    <property type="term" value="F:polynucleotide 5'-hydroxyl-kinase activity"/>
    <property type="evidence" value="ECO:0007669"/>
    <property type="project" value="InterPro"/>
</dbReference>
<dbReference type="GO" id="GO:0031124">
    <property type="term" value="P:mRNA 3'-end processing"/>
    <property type="evidence" value="ECO:0007669"/>
    <property type="project" value="UniProtKB-UniRule"/>
</dbReference>
<dbReference type="GO" id="GO:0006388">
    <property type="term" value="P:tRNA splicing, via endonucleolytic cleavage and ligation"/>
    <property type="evidence" value="ECO:0000250"/>
    <property type="project" value="UniProtKB"/>
</dbReference>
<dbReference type="CDD" id="cd01983">
    <property type="entry name" value="SIMIBI"/>
    <property type="match status" value="1"/>
</dbReference>
<dbReference type="FunFam" id="2.40.30.330:FF:000001">
    <property type="entry name" value="Protein CLP1 homolog"/>
    <property type="match status" value="1"/>
</dbReference>
<dbReference type="FunFam" id="3.40.50.300:FF:000454">
    <property type="entry name" value="Protein CLP1 homolog"/>
    <property type="match status" value="1"/>
</dbReference>
<dbReference type="FunFam" id="2.60.120.1030:FF:000001">
    <property type="entry name" value="Protein CLP1 homolog 5"/>
    <property type="match status" value="1"/>
</dbReference>
<dbReference type="Gene3D" id="2.60.120.1030">
    <property type="entry name" value="Clp1, DNA binding domain"/>
    <property type="match status" value="1"/>
</dbReference>
<dbReference type="Gene3D" id="3.40.50.300">
    <property type="entry name" value="P-loop containing nucleotide triphosphate hydrolases"/>
    <property type="match status" value="1"/>
</dbReference>
<dbReference type="Gene3D" id="2.40.30.330">
    <property type="entry name" value="Pre-mRNA cleavage complex subunit Clp1, C-terminal domain"/>
    <property type="match status" value="1"/>
</dbReference>
<dbReference type="HAMAP" id="MF_03035">
    <property type="entry name" value="Clp1"/>
    <property type="match status" value="1"/>
</dbReference>
<dbReference type="InterPro" id="IPR028606">
    <property type="entry name" value="Clp1"/>
</dbReference>
<dbReference type="InterPro" id="IPR045116">
    <property type="entry name" value="Clp1/Grc3"/>
</dbReference>
<dbReference type="InterPro" id="IPR010655">
    <property type="entry name" value="Clp1_C"/>
</dbReference>
<dbReference type="InterPro" id="IPR038238">
    <property type="entry name" value="Clp1_C_sf"/>
</dbReference>
<dbReference type="InterPro" id="IPR032324">
    <property type="entry name" value="Clp1_N"/>
</dbReference>
<dbReference type="InterPro" id="IPR038239">
    <property type="entry name" value="Clp1_N_sf"/>
</dbReference>
<dbReference type="InterPro" id="IPR032319">
    <property type="entry name" value="CLP1_P"/>
</dbReference>
<dbReference type="InterPro" id="IPR027417">
    <property type="entry name" value="P-loop_NTPase"/>
</dbReference>
<dbReference type="PANTHER" id="PTHR12755">
    <property type="entry name" value="CLEAVAGE/POLYADENYLATION FACTOR IA SUBUNIT CLP1P"/>
    <property type="match status" value="1"/>
</dbReference>
<dbReference type="PANTHER" id="PTHR12755:SF6">
    <property type="entry name" value="POLYRIBONUCLEOTIDE 5'-HYDROXYL-KINASE CLP1"/>
    <property type="match status" value="1"/>
</dbReference>
<dbReference type="Pfam" id="PF06807">
    <property type="entry name" value="Clp1"/>
    <property type="match status" value="1"/>
</dbReference>
<dbReference type="Pfam" id="PF16573">
    <property type="entry name" value="CLP1_N"/>
    <property type="match status" value="1"/>
</dbReference>
<dbReference type="Pfam" id="PF16575">
    <property type="entry name" value="CLP1_P"/>
    <property type="match status" value="1"/>
</dbReference>
<dbReference type="SUPFAM" id="SSF52540">
    <property type="entry name" value="P-loop containing nucleoside triphosphate hydrolases"/>
    <property type="match status" value="1"/>
</dbReference>
<sequence length="425" mass="46939">MSEELSHGKDYTLESDSELRFEIEQKDAKVLVTLISGFAELFGTELVKKKKYEFGVGAKVAIFTYQGCVLHVSGKMDVCYISKETPMVQYLNCHAALEQFRTDAEDKDQRGPVAMVVGPMDVGKSTLCRILLNYAVRVGRRPLYADLDVGQGAIAISGNVATILIERPASVEDGFPKTAPLVYHFGHKSPGGNSVLYNSVVSKMAEVTLQSLNSNKRTKSSGIIINTCGWVKGSGYAHLLHAAQAYGACAIFVLDQERLYNELLRDVPQGVNVVLLPKSGGVVERSKELRHESRDLRMKEYFYGNPRAPFYPFSFEVKFQDLRLYKIGAPPLPDSCMPIGMKAEDNKTKVVAVTPTPALIHHILALSFAESVEDDVIGSNVAGFCCVTEVDMERQAVMVLSPQPRPLPPNSLLLWSELQFMDNHT</sequence>
<gene>
    <name type="primary">cbc</name>
    <name type="ORF">GF11182</name>
</gene>
<proteinExistence type="inferred from homology"/>
<feature type="chain" id="PRO_0000375177" description="Protein CLP1 homolog">
    <location>
        <begin position="1"/>
        <end position="425"/>
    </location>
</feature>
<feature type="binding site" evidence="1">
    <location>
        <position position="18"/>
    </location>
    <ligand>
        <name>ATP</name>
        <dbReference type="ChEBI" id="CHEBI:30616"/>
    </ligand>
</feature>
<feature type="binding site" evidence="1">
    <location>
        <position position="59"/>
    </location>
    <ligand>
        <name>ATP</name>
        <dbReference type="ChEBI" id="CHEBI:30616"/>
    </ligand>
</feature>
<feature type="binding site" evidence="1">
    <location>
        <begin position="121"/>
        <end position="126"/>
    </location>
    <ligand>
        <name>ATP</name>
        <dbReference type="ChEBI" id="CHEBI:30616"/>
    </ligand>
</feature>
<protein>
    <recommendedName>
        <fullName evidence="1">Protein CLP1 homolog</fullName>
    </recommendedName>
</protein>
<comment type="function">
    <text evidence="1">Required for endonucleolytic cleavage during polyadenylation-dependent pre-mRNA 3'-end formation.</text>
</comment>
<comment type="subcellular location">
    <subcellularLocation>
        <location evidence="1">Nucleus</location>
    </subcellularLocation>
</comment>
<comment type="similarity">
    <text evidence="1">Belongs to the Clp1 family. Clp1 subfamily.</text>
</comment>
<accession>B3MGZ0</accession>
<name>CLP1_DROAN</name>